<comment type="function">
    <text evidence="1">This b-type cytochrome is tightly associated with the reaction center of photosystem II (PSII). PSII is a light-driven water:plastoquinone oxidoreductase that uses light energy to abstract electrons from H(2)O, generating O(2) and a proton gradient subsequently used for ATP formation. It consists of a core antenna complex that captures photons, and an electron transfer chain that converts photonic excitation into a charge separation.</text>
</comment>
<comment type="cofactor">
    <cofactor evidence="1">
        <name>heme b</name>
        <dbReference type="ChEBI" id="CHEBI:60344"/>
    </cofactor>
    <text evidence="1">With its partner (PsbE) binds heme. PSII binds additional chlorophylls, carotenoids and specific lipids.</text>
</comment>
<comment type="subunit">
    <text evidence="1">Heterodimer of an alpha subunit and a beta subunit. PSII is composed of 1 copy each of membrane proteins PsbA, PsbB, PsbC, PsbD, PsbE, PsbF, PsbH, PsbI, PsbJ, PsbK, PsbL, PsbM, PsbT, PsbX, PsbY, PsbZ, Psb30/Ycf12, at least 3 peripheral proteins of the oxygen-evolving complex and a large number of cofactors. It forms dimeric complexes.</text>
</comment>
<comment type="subcellular location">
    <subcellularLocation>
        <location evidence="1">Plastid</location>
        <location evidence="1">Chloroplast thylakoid membrane</location>
        <topology evidence="1">Single-pass membrane protein</topology>
    </subcellularLocation>
</comment>
<comment type="similarity">
    <text evidence="1">Belongs to the PsbE/PsbF family.</text>
</comment>
<sequence>MTIDRTYPIFTVRWLAVHGLAVPTVFFLGSISAMQFIQR</sequence>
<proteinExistence type="inferred from homology"/>
<reference key="1">
    <citation type="journal article" date="2006" name="Mol. Biol. Evol.">
        <title>The chloroplast genome sequence of Chara vulgaris sheds new light into the closest green algal relatives of land plants.</title>
        <authorList>
            <person name="Turmel M."/>
            <person name="Otis C."/>
            <person name="Lemieux C."/>
        </authorList>
    </citation>
    <scope>NUCLEOTIDE SEQUENCE [LARGE SCALE GENOMIC DNA]</scope>
</reference>
<dbReference type="EMBL" id="DQ229107">
    <property type="protein sequence ID" value="ABA61964.1"/>
    <property type="molecule type" value="Genomic_DNA"/>
</dbReference>
<dbReference type="RefSeq" id="YP_635759.1">
    <property type="nucleotide sequence ID" value="NC_008097.1"/>
</dbReference>
<dbReference type="SMR" id="Q1ACI8"/>
<dbReference type="GeneID" id="4100335"/>
<dbReference type="GO" id="GO:0009535">
    <property type="term" value="C:chloroplast thylakoid membrane"/>
    <property type="evidence" value="ECO:0007669"/>
    <property type="project" value="UniProtKB-SubCell"/>
</dbReference>
<dbReference type="GO" id="GO:0009539">
    <property type="term" value="C:photosystem II reaction center"/>
    <property type="evidence" value="ECO:0007669"/>
    <property type="project" value="InterPro"/>
</dbReference>
<dbReference type="GO" id="GO:0009055">
    <property type="term" value="F:electron transfer activity"/>
    <property type="evidence" value="ECO:0007669"/>
    <property type="project" value="UniProtKB-UniRule"/>
</dbReference>
<dbReference type="GO" id="GO:0020037">
    <property type="term" value="F:heme binding"/>
    <property type="evidence" value="ECO:0007669"/>
    <property type="project" value="InterPro"/>
</dbReference>
<dbReference type="GO" id="GO:0005506">
    <property type="term" value="F:iron ion binding"/>
    <property type="evidence" value="ECO:0007669"/>
    <property type="project" value="UniProtKB-UniRule"/>
</dbReference>
<dbReference type="GO" id="GO:0009767">
    <property type="term" value="P:photosynthetic electron transport chain"/>
    <property type="evidence" value="ECO:0007669"/>
    <property type="project" value="InterPro"/>
</dbReference>
<dbReference type="HAMAP" id="MF_00643">
    <property type="entry name" value="PSII_PsbF"/>
    <property type="match status" value="1"/>
</dbReference>
<dbReference type="InterPro" id="IPR006241">
    <property type="entry name" value="PSII_cyt_b559_bsu"/>
</dbReference>
<dbReference type="InterPro" id="IPR006216">
    <property type="entry name" value="PSII_cyt_b559_CS"/>
</dbReference>
<dbReference type="InterPro" id="IPR013081">
    <property type="entry name" value="PSII_cyt_b559_N"/>
</dbReference>
<dbReference type="NCBIfam" id="TIGR01333">
    <property type="entry name" value="cyt_b559_beta"/>
    <property type="match status" value="1"/>
</dbReference>
<dbReference type="Pfam" id="PF00283">
    <property type="entry name" value="Cytochrom_B559"/>
    <property type="match status" value="1"/>
</dbReference>
<dbReference type="PIRSF" id="PIRSF000037">
    <property type="entry name" value="PsbF"/>
    <property type="match status" value="1"/>
</dbReference>
<dbReference type="SUPFAM" id="SSF161045">
    <property type="entry name" value="Cytochrome b559 subunits"/>
    <property type="match status" value="1"/>
</dbReference>
<dbReference type="PROSITE" id="PS00537">
    <property type="entry name" value="CYTOCHROME_B559"/>
    <property type="match status" value="1"/>
</dbReference>
<keyword id="KW-0150">Chloroplast</keyword>
<keyword id="KW-0249">Electron transport</keyword>
<keyword id="KW-0349">Heme</keyword>
<keyword id="KW-0408">Iron</keyword>
<keyword id="KW-0472">Membrane</keyword>
<keyword id="KW-0479">Metal-binding</keyword>
<keyword id="KW-0602">Photosynthesis</keyword>
<keyword id="KW-0604">Photosystem II</keyword>
<keyword id="KW-0934">Plastid</keyword>
<keyword id="KW-0793">Thylakoid</keyword>
<keyword id="KW-0812">Transmembrane</keyword>
<keyword id="KW-1133">Transmembrane helix</keyword>
<keyword id="KW-0813">Transport</keyword>
<name>PSBF_CHAVU</name>
<geneLocation type="chloroplast"/>
<evidence type="ECO:0000255" key="1">
    <source>
        <dbReference type="HAMAP-Rule" id="MF_00643"/>
    </source>
</evidence>
<protein>
    <recommendedName>
        <fullName evidence="1">Cytochrome b559 subunit beta</fullName>
    </recommendedName>
    <alternativeName>
        <fullName evidence="1">PSII reaction center subunit VI</fullName>
    </alternativeName>
</protein>
<accession>Q1ACI8</accession>
<gene>
    <name evidence="1" type="primary">psbF</name>
</gene>
<feature type="chain" id="PRO_0000275725" description="Cytochrome b559 subunit beta">
    <location>
        <begin position="1"/>
        <end position="39"/>
    </location>
</feature>
<feature type="transmembrane region" description="Helical" evidence="1">
    <location>
        <begin position="14"/>
        <end position="30"/>
    </location>
</feature>
<feature type="binding site" description="axial binding residue" evidence="1">
    <location>
        <position position="18"/>
    </location>
    <ligand>
        <name>heme</name>
        <dbReference type="ChEBI" id="CHEBI:30413"/>
        <note>ligand shared with alpha subunit</note>
    </ligand>
    <ligandPart>
        <name>Fe</name>
        <dbReference type="ChEBI" id="CHEBI:18248"/>
    </ligandPart>
</feature>
<organism>
    <name type="scientific">Chara vulgaris</name>
    <name type="common">Common stonewort</name>
    <dbReference type="NCBI Taxonomy" id="55564"/>
    <lineage>
        <taxon>Eukaryota</taxon>
        <taxon>Viridiplantae</taxon>
        <taxon>Streptophyta</taxon>
        <taxon>Charophyceae</taxon>
        <taxon>Charales</taxon>
        <taxon>Characeae</taxon>
        <taxon>Chara</taxon>
    </lineage>
</organism>